<dbReference type="EMBL" id="CR628336">
    <property type="protein sequence ID" value="CAH11555.1"/>
    <property type="molecule type" value="Genomic_DNA"/>
</dbReference>
<dbReference type="RefSeq" id="WP_010946091.1">
    <property type="nucleotide sequence ID" value="NC_006368.1"/>
</dbReference>
<dbReference type="SMR" id="Q5X846"/>
<dbReference type="GeneID" id="57034345"/>
<dbReference type="KEGG" id="lpp:lpp0407"/>
<dbReference type="LegioList" id="lpp0407"/>
<dbReference type="HOGENOM" id="CLU_139869_0_0_6"/>
<dbReference type="GO" id="GO:0005737">
    <property type="term" value="C:cytoplasm"/>
    <property type="evidence" value="ECO:0007669"/>
    <property type="project" value="UniProtKB-ARBA"/>
</dbReference>
<dbReference type="GO" id="GO:0015935">
    <property type="term" value="C:small ribosomal subunit"/>
    <property type="evidence" value="ECO:0007669"/>
    <property type="project" value="TreeGrafter"/>
</dbReference>
<dbReference type="GO" id="GO:0046872">
    <property type="term" value="F:metal ion binding"/>
    <property type="evidence" value="ECO:0007669"/>
    <property type="project" value="UniProtKB-KW"/>
</dbReference>
<dbReference type="GO" id="GO:0019843">
    <property type="term" value="F:rRNA binding"/>
    <property type="evidence" value="ECO:0007669"/>
    <property type="project" value="UniProtKB-UniRule"/>
</dbReference>
<dbReference type="GO" id="GO:0003735">
    <property type="term" value="F:structural constituent of ribosome"/>
    <property type="evidence" value="ECO:0007669"/>
    <property type="project" value="InterPro"/>
</dbReference>
<dbReference type="GO" id="GO:0006412">
    <property type="term" value="P:translation"/>
    <property type="evidence" value="ECO:0007669"/>
    <property type="project" value="UniProtKB-UniRule"/>
</dbReference>
<dbReference type="FunFam" id="1.10.287.1480:FF:000001">
    <property type="entry name" value="30S ribosomal protein S14"/>
    <property type="match status" value="1"/>
</dbReference>
<dbReference type="Gene3D" id="1.10.287.1480">
    <property type="match status" value="1"/>
</dbReference>
<dbReference type="InterPro" id="IPR001209">
    <property type="entry name" value="Ribosomal_uS14"/>
</dbReference>
<dbReference type="InterPro" id="IPR023036">
    <property type="entry name" value="Ribosomal_uS14_bac/plastid"/>
</dbReference>
<dbReference type="InterPro" id="IPR018271">
    <property type="entry name" value="Ribosomal_uS14_CS"/>
</dbReference>
<dbReference type="NCBIfam" id="NF005370">
    <property type="entry name" value="PRK06911.1"/>
    <property type="match status" value="1"/>
</dbReference>
<dbReference type="NCBIfam" id="NF006477">
    <property type="entry name" value="PRK08881.1"/>
    <property type="match status" value="1"/>
</dbReference>
<dbReference type="PANTHER" id="PTHR19836">
    <property type="entry name" value="30S RIBOSOMAL PROTEIN S14"/>
    <property type="match status" value="1"/>
</dbReference>
<dbReference type="PANTHER" id="PTHR19836:SF19">
    <property type="entry name" value="SMALL RIBOSOMAL SUBUNIT PROTEIN US14M"/>
    <property type="match status" value="1"/>
</dbReference>
<dbReference type="Pfam" id="PF00253">
    <property type="entry name" value="Ribosomal_S14"/>
    <property type="match status" value="1"/>
</dbReference>
<dbReference type="SUPFAM" id="SSF57716">
    <property type="entry name" value="Glucocorticoid receptor-like (DNA-binding domain)"/>
    <property type="match status" value="1"/>
</dbReference>
<dbReference type="PROSITE" id="PS00527">
    <property type="entry name" value="RIBOSOMAL_S14"/>
    <property type="match status" value="1"/>
</dbReference>
<evidence type="ECO:0000250" key="1"/>
<evidence type="ECO:0000255" key="2"/>
<evidence type="ECO:0000305" key="3"/>
<proteinExistence type="inferred from homology"/>
<feature type="chain" id="PRO_0000269111" description="Small ribosomal subunit protein uS14">
    <location>
        <begin position="1"/>
        <end position="100"/>
    </location>
</feature>
<feature type="binding site" evidence="2">
    <location>
        <position position="63"/>
    </location>
    <ligand>
        <name>Zn(2+)</name>
        <dbReference type="ChEBI" id="CHEBI:29105"/>
    </ligand>
</feature>
<feature type="binding site" evidence="2">
    <location>
        <position position="66"/>
    </location>
    <ligand>
        <name>Zn(2+)</name>
        <dbReference type="ChEBI" id="CHEBI:29105"/>
    </ligand>
</feature>
<feature type="binding site" evidence="2">
    <location>
        <position position="79"/>
    </location>
    <ligand>
        <name>Zn(2+)</name>
        <dbReference type="ChEBI" id="CHEBI:29105"/>
    </ligand>
</feature>
<feature type="binding site" evidence="2">
    <location>
        <position position="82"/>
    </location>
    <ligand>
        <name>Zn(2+)</name>
        <dbReference type="ChEBI" id="CHEBI:29105"/>
    </ligand>
</feature>
<gene>
    <name type="primary">rpsN</name>
    <name type="synonym">rpsZ</name>
    <name type="ordered locus">lpp0407</name>
</gene>
<organism>
    <name type="scientific">Legionella pneumophila (strain Paris)</name>
    <dbReference type="NCBI Taxonomy" id="297246"/>
    <lineage>
        <taxon>Bacteria</taxon>
        <taxon>Pseudomonadati</taxon>
        <taxon>Pseudomonadota</taxon>
        <taxon>Gammaproteobacteria</taxon>
        <taxon>Legionellales</taxon>
        <taxon>Legionellaceae</taxon>
        <taxon>Legionella</taxon>
    </lineage>
</organism>
<keyword id="KW-0479">Metal-binding</keyword>
<keyword id="KW-0687">Ribonucleoprotein</keyword>
<keyword id="KW-0689">Ribosomal protein</keyword>
<keyword id="KW-0694">RNA-binding</keyword>
<keyword id="KW-0699">rRNA-binding</keyword>
<keyword id="KW-0862">Zinc</keyword>
<accession>Q5X846</accession>
<sequence>MAKKSMLMRESKRAKLVEKYRQRRNELKQLIKSSDDFQVIMESQAKLAKLPVNSNPVRYVTRCKQCGRPHAVYRKFNLCRICLRQQLMVGNIPGGRKSSW</sequence>
<reference key="1">
    <citation type="journal article" date="2004" name="Nat. Genet.">
        <title>Evidence in the Legionella pneumophila genome for exploitation of host cell functions and high genome plasticity.</title>
        <authorList>
            <person name="Cazalet C."/>
            <person name="Rusniok C."/>
            <person name="Brueggemann H."/>
            <person name="Zidane N."/>
            <person name="Magnier A."/>
            <person name="Ma L."/>
            <person name="Tichit M."/>
            <person name="Jarraud S."/>
            <person name="Bouchier C."/>
            <person name="Vandenesch F."/>
            <person name="Kunst F."/>
            <person name="Etienne J."/>
            <person name="Glaser P."/>
            <person name="Buchrieser C."/>
        </authorList>
    </citation>
    <scope>NUCLEOTIDE SEQUENCE [LARGE SCALE GENOMIC DNA]</scope>
    <source>
        <strain>Paris</strain>
    </source>
</reference>
<comment type="function">
    <text evidence="1">Binds 16S rRNA, required for the assembly of 30S particles and may also be responsible for determining the conformation of the 16S rRNA at the A site.</text>
</comment>
<comment type="cofactor">
    <cofactor evidence="3">
        <name>Zn(2+)</name>
        <dbReference type="ChEBI" id="CHEBI:29105"/>
    </cofactor>
    <text evidence="3">Binds 1 zinc ion per subunit.</text>
</comment>
<comment type="subunit">
    <text evidence="1">Part of the 30S ribosomal subunit. Contacts proteins S3 and S10 (By similarity).</text>
</comment>
<comment type="similarity">
    <text evidence="3">Belongs to the universal ribosomal protein uS14 family.</text>
</comment>
<comment type="caution">
    <text evidence="3">This protein has the conserved residues necessary to bind a zinc ion as do the zinc-binding member of this family, but it is not clear if does so.</text>
</comment>
<protein>
    <recommendedName>
        <fullName evidence="3">Small ribosomal subunit protein uS14</fullName>
    </recommendedName>
    <alternativeName>
        <fullName>30S ribosomal protein S14</fullName>
    </alternativeName>
</protein>
<name>RS14_LEGPA</name>